<reference key="1">
    <citation type="journal article" date="2011" name="J. Bacteriol.">
        <title>Comparative genomics of 28 Salmonella enterica isolates: evidence for CRISPR-mediated adaptive sublineage evolution.</title>
        <authorList>
            <person name="Fricke W.F."/>
            <person name="Mammel M.K."/>
            <person name="McDermott P.F."/>
            <person name="Tartera C."/>
            <person name="White D.G."/>
            <person name="Leclerc J.E."/>
            <person name="Ravel J."/>
            <person name="Cebula T.A."/>
        </authorList>
    </citation>
    <scope>NUCLEOTIDE SEQUENCE [LARGE SCALE GENOMIC DNA]</scope>
    <source>
        <strain>SL254</strain>
    </source>
</reference>
<protein>
    <recommendedName>
        <fullName evidence="1">Acyl carrier protein phosphodiesterase</fullName>
        <shortName evidence="1">ACP phosphodiesterase</shortName>
        <ecNumber evidence="1">3.1.4.14</ecNumber>
    </recommendedName>
</protein>
<organism>
    <name type="scientific">Salmonella newport (strain SL254)</name>
    <dbReference type="NCBI Taxonomy" id="423368"/>
    <lineage>
        <taxon>Bacteria</taxon>
        <taxon>Pseudomonadati</taxon>
        <taxon>Pseudomonadota</taxon>
        <taxon>Gammaproteobacteria</taxon>
        <taxon>Enterobacterales</taxon>
        <taxon>Enterobacteriaceae</taxon>
        <taxon>Salmonella</taxon>
    </lineage>
</organism>
<name>ACPH_SALNS</name>
<feature type="chain" id="PRO_1000188815" description="Acyl carrier protein phosphodiesterase">
    <location>
        <begin position="1"/>
        <end position="193"/>
    </location>
</feature>
<evidence type="ECO:0000255" key="1">
    <source>
        <dbReference type="HAMAP-Rule" id="MF_01950"/>
    </source>
</evidence>
<proteinExistence type="inferred from homology"/>
<sequence length="193" mass="22899">MNFLAHLHLAHLADSSLSGNLLADFVRGNPATHYPPDVVEGIYMHRRIDVITDNLPEVREAREWFRHETRRVAPITLDVMWDHFLSRHWTQISPDFPLQAFVGYAHAQVATILPDSPPRFVNLNDYLWSEKWLERYRDMDFIQNVLNGMANRRPRLDALRDSWYDLDAHYDALEERFWHFYPRMMAQAARKAL</sequence>
<comment type="function">
    <text evidence="1">Converts holo-ACP to apo-ACP by hydrolytic cleavage of the phosphopantetheine prosthetic group from ACP.</text>
</comment>
<comment type="catalytic activity">
    <reaction evidence="1">
        <text>holo-[ACP] + H2O = apo-[ACP] + (R)-4'-phosphopantetheine + H(+)</text>
        <dbReference type="Rhea" id="RHEA:20537"/>
        <dbReference type="Rhea" id="RHEA-COMP:9685"/>
        <dbReference type="Rhea" id="RHEA-COMP:9690"/>
        <dbReference type="ChEBI" id="CHEBI:15377"/>
        <dbReference type="ChEBI" id="CHEBI:15378"/>
        <dbReference type="ChEBI" id="CHEBI:29999"/>
        <dbReference type="ChEBI" id="CHEBI:61723"/>
        <dbReference type="ChEBI" id="CHEBI:64479"/>
        <dbReference type="EC" id="3.1.4.14"/>
    </reaction>
</comment>
<comment type="similarity">
    <text evidence="1">Belongs to the AcpH family.</text>
</comment>
<keyword id="KW-0275">Fatty acid biosynthesis</keyword>
<keyword id="KW-0276">Fatty acid metabolism</keyword>
<keyword id="KW-0378">Hydrolase</keyword>
<keyword id="KW-0444">Lipid biosynthesis</keyword>
<keyword id="KW-0443">Lipid metabolism</keyword>
<gene>
    <name evidence="1" type="primary">acpH</name>
    <name type="ordered locus">SNSL254_A0448</name>
</gene>
<accession>B4SWP4</accession>
<dbReference type="EC" id="3.1.4.14" evidence="1"/>
<dbReference type="EMBL" id="CP001113">
    <property type="protein sequence ID" value="ACF62353.1"/>
    <property type="molecule type" value="Genomic_DNA"/>
</dbReference>
<dbReference type="RefSeq" id="WP_001009854.1">
    <property type="nucleotide sequence ID" value="NZ_CCMR01000003.1"/>
</dbReference>
<dbReference type="SMR" id="B4SWP4"/>
<dbReference type="KEGG" id="see:SNSL254_A0448"/>
<dbReference type="HOGENOM" id="CLU_099370_1_0_6"/>
<dbReference type="Proteomes" id="UP000008824">
    <property type="component" value="Chromosome"/>
</dbReference>
<dbReference type="GO" id="GO:0008770">
    <property type="term" value="F:[acyl-carrier-protein] phosphodiesterase activity"/>
    <property type="evidence" value="ECO:0007669"/>
    <property type="project" value="UniProtKB-UniRule"/>
</dbReference>
<dbReference type="GO" id="GO:0006633">
    <property type="term" value="P:fatty acid biosynthetic process"/>
    <property type="evidence" value="ECO:0007669"/>
    <property type="project" value="UniProtKB-UniRule"/>
</dbReference>
<dbReference type="HAMAP" id="MF_01950">
    <property type="entry name" value="AcpH"/>
    <property type="match status" value="1"/>
</dbReference>
<dbReference type="InterPro" id="IPR007431">
    <property type="entry name" value="ACP_PD"/>
</dbReference>
<dbReference type="InterPro" id="IPR023491">
    <property type="entry name" value="ACP_phosphodiesterase_gpbac"/>
</dbReference>
<dbReference type="NCBIfam" id="NF007466">
    <property type="entry name" value="PRK10045.1"/>
    <property type="match status" value="1"/>
</dbReference>
<dbReference type="PANTHER" id="PTHR38764">
    <property type="entry name" value="ACYL CARRIER PROTEIN PHOSPHODIESTERASE"/>
    <property type="match status" value="1"/>
</dbReference>
<dbReference type="PANTHER" id="PTHR38764:SF1">
    <property type="entry name" value="ACYL CARRIER PROTEIN PHOSPHODIESTERASE"/>
    <property type="match status" value="1"/>
</dbReference>
<dbReference type="Pfam" id="PF04336">
    <property type="entry name" value="ACP_PD"/>
    <property type="match status" value="1"/>
</dbReference>
<dbReference type="PIRSF" id="PIRSF011489">
    <property type="entry name" value="DUF479"/>
    <property type="match status" value="1"/>
</dbReference>